<evidence type="ECO:0000250" key="1"/>
<evidence type="ECO:0000269" key="2">
    <source ref="1"/>
</evidence>
<feature type="peptide" id="PRO_0000043757" description="Caeridin-1.1/1.2/1.3">
    <location>
        <begin position="1"/>
        <end position="12"/>
    </location>
</feature>
<feature type="modified residue" description="Leucine amide" evidence="2">
    <location>
        <position position="12"/>
    </location>
</feature>
<sequence length="12" mass="1141">GLLDGLLGTLGL</sequence>
<proteinExistence type="evidence at protein level"/>
<dbReference type="GO" id="GO:0005576">
    <property type="term" value="C:extracellular region"/>
    <property type="evidence" value="ECO:0007669"/>
    <property type="project" value="UniProtKB-SubCell"/>
</dbReference>
<dbReference type="GO" id="GO:0006952">
    <property type="term" value="P:defense response"/>
    <property type="evidence" value="ECO:0007669"/>
    <property type="project" value="UniProtKB-KW"/>
</dbReference>
<accession>P62565</accession>
<accession>P56245</accession>
<accession>P81253</accession>
<organism>
    <name type="scientific">Ranoidea splendida</name>
    <name type="common">Magnificent tree frog</name>
    <name type="synonym">Litoria splendida</name>
    <dbReference type="NCBI Taxonomy" id="30345"/>
    <lineage>
        <taxon>Eukaryota</taxon>
        <taxon>Metazoa</taxon>
        <taxon>Chordata</taxon>
        <taxon>Craniata</taxon>
        <taxon>Vertebrata</taxon>
        <taxon>Euteleostomi</taxon>
        <taxon>Amphibia</taxon>
        <taxon>Batrachia</taxon>
        <taxon>Anura</taxon>
        <taxon>Neobatrachia</taxon>
        <taxon>Hyloidea</taxon>
        <taxon>Hylidae</taxon>
        <taxon>Pelodryadinae</taxon>
        <taxon>Ranoidea</taxon>
    </lineage>
</organism>
<protein>
    <recommendedName>
        <fullName>Caeridin-1.1/1.2/1.3</fullName>
    </recommendedName>
</protein>
<keyword id="KW-0027">Amidation</keyword>
<keyword id="KW-0878">Amphibian defense peptide</keyword>
<keyword id="KW-0903">Direct protein sequencing</keyword>
<keyword id="KW-0964">Secreted</keyword>
<name>CDN11_RANSP</name>
<comment type="function">
    <text>Caeridins show neither neuropeptide activity nor antibiotic activity.</text>
</comment>
<comment type="subcellular location">
    <subcellularLocation>
        <location>Secreted</location>
    </subcellularLocation>
</comment>
<comment type="tissue specificity">
    <text>Expressed by the skin parotoid and/or rostral glands.</text>
</comment>
<comment type="PTM">
    <text evidence="1">Isomerization alpha-beta of the Asp-4 residue in caeridin 1.2; a cyclic succinimide may be formed between Asp-4 and Gly-5 residues in caeridin 1.3.</text>
</comment>
<comment type="mass spectrometry" mass="1139.0" method="FAB" evidence="2"/>
<reference key="1">
    <citation type="journal article" date="1992" name="J. Chem. Soc. Perkin Trans. I">
        <title>Peptides from Australian frogs. Structures of the caerins and caeridin 1 from Litoria splendida.</title>
        <authorList>
            <person name="Stone D.J.M."/>
            <person name="Waugh R.J."/>
            <person name="Bowie J.H."/>
            <person name="Wallace J.C."/>
            <person name="Tyler M.J."/>
        </authorList>
    </citation>
    <scope>PROTEIN SEQUENCE</scope>
    <scope>AMIDATION AT LEU-12</scope>
    <scope>MASS SPECTROMETRY</scope>
    <source>
        <tissue>Parotoid gland</tissue>
    </source>
</reference>